<reference key="1">
    <citation type="journal article" date="1998" name="J. Biochem.">
        <title>Identification of the protein import components of the rat mitochondrial inner membrane, rTIM17, rTIM23, and rTIM44.</title>
        <authorList>
            <person name="Ishihara N."/>
            <person name="Mihara K."/>
        </authorList>
    </citation>
    <scope>NUCLEOTIDE SEQUENCE [MRNA]</scope>
    <scope>SUBCELLULAR LOCATION</scope>
    <source>
        <tissue>Liver</tissue>
    </source>
</reference>
<reference key="2">
    <citation type="journal article" date="2006" name="Proc. Natl. Acad. Sci. U.S.A.">
        <title>Quantitative phosphoproteomics of vasopressin-sensitive renal cells: regulation of aquaporin-2 phosphorylation at two sites.</title>
        <authorList>
            <person name="Hoffert J.D."/>
            <person name="Pisitkun T."/>
            <person name="Wang G."/>
            <person name="Shen R.-F."/>
            <person name="Knepper M.A."/>
        </authorList>
    </citation>
    <scope>IDENTIFICATION BY MASS SPECTROMETRY [LARGE SCALE ANALYSIS]</scope>
</reference>
<comment type="function">
    <text evidence="1 3">Essential component of the PAM complex, a complex required for the translocation of transit peptide-containing proteins from the inner membrane into the mitochondrial matrix in an ATP-dependent manner (By similarity). Recruits mitochondrial HSP70 to drive protein translocation into the matrix using ATP as an energy source (By similarity).</text>
</comment>
<comment type="subunit">
    <text evidence="1 3">Probable component of the PAM complex at least composed of a mitochondrial HSP70 protein, GRPEL1 or GRPEL2, TIMM44, TIMM16/PAM16 and TIMM14/DNAJC19 (By similarity). The complex interacts with the TIMM23 component of the TIM23 complex. Interacts with SLC25A4/ANT1 and SLC25A5/ANT2; leading to inhibit the presequence translocase TIMM23, thereby promoting stabilization of PINK1 (By similarity).</text>
</comment>
<comment type="subcellular location">
    <subcellularLocation>
        <location evidence="5">Mitochondrion inner membrane</location>
        <topology evidence="5">Peripheral membrane protein</topology>
        <orientation evidence="5">Matrix side</orientation>
    </subcellularLocation>
    <subcellularLocation>
        <location evidence="5">Mitochondrion matrix</location>
    </subcellularLocation>
</comment>
<comment type="similarity">
    <text evidence="6">Belongs to the Tim44 family.</text>
</comment>
<sequence length="453" mass="51060">MAAAALRGGWCRCPRRCLGSGIQFLSSHNLPRGGSSYQISRPGGELTLTKSYSSGSRKGFLSGLLDNIKQELAQNKEMKESIKKFRDEAKKLEESDALQEARRKYKTIESETVRTSEAIKKKLGELTGTVKESLDEVSKSDLGRKIKEGVEEAARTAKQSAESVSKGGEKLGKTAAFKAISQGVESVKKEIDESVLGHTGTYRRPERLRKRTEFAGAKFKESKVFEANEEALGVVLHKDSKWYQQWKDFKDNNVVFNRFFEMKMKYDESDNVLIRASRALTDKVTDLLGGLFSKTEMSEVLTEILRVDPTFDKDRFLHQCETDIIPNILEAMISGELDILKDWCYEATYNQLAHSIQQAKALGLQFHSRILDISNVDLAMGKMMEQGPVLIVTFQAQLVMVIKNPKGEVFDGDPDKVLRMLYVWALCRDQEELNPYAAWRLLDISASSTEQIL</sequence>
<organism>
    <name type="scientific">Rattus norvegicus</name>
    <name type="common">Rat</name>
    <dbReference type="NCBI Taxonomy" id="10116"/>
    <lineage>
        <taxon>Eukaryota</taxon>
        <taxon>Metazoa</taxon>
        <taxon>Chordata</taxon>
        <taxon>Craniata</taxon>
        <taxon>Vertebrata</taxon>
        <taxon>Euteleostomi</taxon>
        <taxon>Mammalia</taxon>
        <taxon>Eutheria</taxon>
        <taxon>Euarchontoglires</taxon>
        <taxon>Glires</taxon>
        <taxon>Rodentia</taxon>
        <taxon>Myomorpha</taxon>
        <taxon>Muroidea</taxon>
        <taxon>Muridae</taxon>
        <taxon>Murinae</taxon>
        <taxon>Rattus</taxon>
    </lineage>
</organism>
<dbReference type="EMBL" id="AB006452">
    <property type="protein sequence ID" value="BAA21820.1"/>
    <property type="molecule type" value="mRNA"/>
</dbReference>
<dbReference type="PIR" id="JE0155">
    <property type="entry name" value="JE0155"/>
</dbReference>
<dbReference type="RefSeq" id="NP_058963.1">
    <property type="nucleotide sequence ID" value="NM_017267.1"/>
</dbReference>
<dbReference type="SMR" id="O35094"/>
<dbReference type="BioGRID" id="248258">
    <property type="interactions" value="2"/>
</dbReference>
<dbReference type="CORUM" id="O35094"/>
<dbReference type="FunCoup" id="O35094">
    <property type="interactions" value="3017"/>
</dbReference>
<dbReference type="IntAct" id="O35094">
    <property type="interactions" value="4"/>
</dbReference>
<dbReference type="STRING" id="10116.ENSRNOP00000001409"/>
<dbReference type="iPTMnet" id="O35094"/>
<dbReference type="PhosphoSitePlus" id="O35094"/>
<dbReference type="jPOST" id="O35094"/>
<dbReference type="PaxDb" id="10116-ENSRNOP00000001409"/>
<dbReference type="GeneID" id="29635"/>
<dbReference type="KEGG" id="rno:29635"/>
<dbReference type="UCSC" id="RGD:3864">
    <property type="organism name" value="rat"/>
</dbReference>
<dbReference type="AGR" id="RGD:3864"/>
<dbReference type="CTD" id="10469"/>
<dbReference type="RGD" id="3864">
    <property type="gene designation" value="Timm44"/>
</dbReference>
<dbReference type="eggNOG" id="KOG2580">
    <property type="taxonomic scope" value="Eukaryota"/>
</dbReference>
<dbReference type="InParanoid" id="O35094"/>
<dbReference type="OrthoDB" id="10265990at2759"/>
<dbReference type="PhylomeDB" id="O35094"/>
<dbReference type="PRO" id="PR:O35094"/>
<dbReference type="Proteomes" id="UP000002494">
    <property type="component" value="Unplaced"/>
</dbReference>
<dbReference type="GO" id="GO:0005743">
    <property type="term" value="C:mitochondrial inner membrane"/>
    <property type="evidence" value="ECO:0000314"/>
    <property type="project" value="RGD"/>
</dbReference>
<dbReference type="GO" id="GO:0005759">
    <property type="term" value="C:mitochondrial matrix"/>
    <property type="evidence" value="ECO:0000266"/>
    <property type="project" value="RGD"/>
</dbReference>
<dbReference type="GO" id="GO:0005744">
    <property type="term" value="C:TIM23 mitochondrial import inner membrane translocase complex"/>
    <property type="evidence" value="ECO:0000266"/>
    <property type="project" value="RGD"/>
</dbReference>
<dbReference type="GO" id="GO:0005524">
    <property type="term" value="F:ATP binding"/>
    <property type="evidence" value="ECO:0007669"/>
    <property type="project" value="UniProtKB-KW"/>
</dbReference>
<dbReference type="GO" id="GO:0051087">
    <property type="term" value="F:protein-folding chaperone binding"/>
    <property type="evidence" value="ECO:0000353"/>
    <property type="project" value="RGD"/>
</dbReference>
<dbReference type="GO" id="GO:0055007">
    <property type="term" value="P:cardiac muscle cell differentiation"/>
    <property type="evidence" value="ECO:0000270"/>
    <property type="project" value="RGD"/>
</dbReference>
<dbReference type="GO" id="GO:0006886">
    <property type="term" value="P:intracellular protein transport"/>
    <property type="evidence" value="ECO:0000315"/>
    <property type="project" value="RGD"/>
</dbReference>
<dbReference type="GO" id="GO:0030150">
    <property type="term" value="P:protein import into mitochondrial matrix"/>
    <property type="evidence" value="ECO:0000318"/>
    <property type="project" value="GO_Central"/>
</dbReference>
<dbReference type="GO" id="GO:1905242">
    <property type="term" value="P:response to 3,3',5-triiodo-L-thyronine"/>
    <property type="evidence" value="ECO:0000270"/>
    <property type="project" value="RGD"/>
</dbReference>
<dbReference type="FunFam" id="3.10.450.240:FF:000001">
    <property type="entry name" value="Mitochondrial import inner membrane translocase subunit TIM44"/>
    <property type="match status" value="1"/>
</dbReference>
<dbReference type="Gene3D" id="3.10.450.240">
    <property type="match status" value="1"/>
</dbReference>
<dbReference type="InterPro" id="IPR032710">
    <property type="entry name" value="NTF2-like_dom_sf"/>
</dbReference>
<dbReference type="InterPro" id="IPR017303">
    <property type="entry name" value="Tim44"/>
</dbReference>
<dbReference type="InterPro" id="IPR039544">
    <property type="entry name" value="Tim44-like"/>
</dbReference>
<dbReference type="InterPro" id="IPR007379">
    <property type="entry name" value="Tim44-like_dom"/>
</dbReference>
<dbReference type="NCBIfam" id="TIGR00984">
    <property type="entry name" value="3a0801s03tim44"/>
    <property type="match status" value="1"/>
</dbReference>
<dbReference type="PANTHER" id="PTHR10721">
    <property type="entry name" value="MITOCHONDRIAL IMPORT INNER MEMBRANE TRANSLOCASE SUBUNIT TIM44"/>
    <property type="match status" value="1"/>
</dbReference>
<dbReference type="PANTHER" id="PTHR10721:SF1">
    <property type="entry name" value="MITOCHONDRIAL IMPORT INNER MEMBRANE TRANSLOCASE SUBUNIT TIM44"/>
    <property type="match status" value="1"/>
</dbReference>
<dbReference type="Pfam" id="PF04280">
    <property type="entry name" value="Tim44"/>
    <property type="match status" value="1"/>
</dbReference>
<dbReference type="PIRSF" id="PIRSF037871">
    <property type="entry name" value="TIM44"/>
    <property type="match status" value="1"/>
</dbReference>
<dbReference type="SMART" id="SM00978">
    <property type="entry name" value="Tim44"/>
    <property type="match status" value="1"/>
</dbReference>
<dbReference type="SUPFAM" id="SSF54427">
    <property type="entry name" value="NTF2-like"/>
    <property type="match status" value="1"/>
</dbReference>
<feature type="transit peptide" description="Mitochondrion" evidence="4">
    <location>
        <begin position="1"/>
        <end status="unknown"/>
    </location>
</feature>
<feature type="chain" id="PRO_0000034316" description="Mitochondrial import inner membrane translocase subunit TIM44">
    <location>
        <begin status="unknown"/>
        <end position="453"/>
    </location>
</feature>
<feature type="binding site" evidence="4">
    <location>
        <begin position="167"/>
        <end position="174"/>
    </location>
    <ligand>
        <name>ATP</name>
        <dbReference type="ChEBI" id="CHEBI:30616"/>
    </ligand>
</feature>
<feature type="modified residue" description="Phosphothreonine" evidence="2">
    <location>
        <position position="129"/>
    </location>
</feature>
<feature type="modified residue" description="N6-succinyllysine" evidence="1">
    <location>
        <position position="178"/>
    </location>
</feature>
<feature type="modified residue" description="Phosphoserine" evidence="2">
    <location>
        <position position="181"/>
    </location>
</feature>
<feature type="modified residue" description="N6-succinyllysine" evidence="1">
    <location>
        <position position="218"/>
    </location>
</feature>
<accession>O35094</accession>
<name>TIM44_RAT</name>
<evidence type="ECO:0000250" key="1">
    <source>
        <dbReference type="UniProtKB" id="O35857"/>
    </source>
</evidence>
<evidence type="ECO:0000250" key="2">
    <source>
        <dbReference type="UniProtKB" id="O43615"/>
    </source>
</evidence>
<evidence type="ECO:0000250" key="3">
    <source>
        <dbReference type="UniProtKB" id="Q01852"/>
    </source>
</evidence>
<evidence type="ECO:0000255" key="4"/>
<evidence type="ECO:0000269" key="5">
    <source>
    </source>
</evidence>
<evidence type="ECO:0000305" key="6"/>
<keyword id="KW-0067">ATP-binding</keyword>
<keyword id="KW-0472">Membrane</keyword>
<keyword id="KW-0496">Mitochondrion</keyword>
<keyword id="KW-0999">Mitochondrion inner membrane</keyword>
<keyword id="KW-0547">Nucleotide-binding</keyword>
<keyword id="KW-0597">Phosphoprotein</keyword>
<keyword id="KW-0653">Protein transport</keyword>
<keyword id="KW-1185">Reference proteome</keyword>
<keyword id="KW-0809">Transit peptide</keyword>
<keyword id="KW-0811">Translocation</keyword>
<keyword id="KW-0813">Transport</keyword>
<gene>
    <name type="primary">Timm44</name>
    <name type="synonym">Mimt44</name>
    <name type="synonym">Tim44</name>
</gene>
<proteinExistence type="evidence at protein level"/>
<protein>
    <recommendedName>
        <fullName>Mitochondrial import inner membrane translocase subunit TIM44</fullName>
    </recommendedName>
</protein>